<accession>Q9LXS7</accession>
<reference key="1">
    <citation type="journal article" date="2000" name="Nature">
        <title>Sequence and analysis of chromosome 3 of the plant Arabidopsis thaliana.</title>
        <authorList>
            <person name="Salanoubat M."/>
            <person name="Lemcke K."/>
            <person name="Rieger M."/>
            <person name="Ansorge W."/>
            <person name="Unseld M."/>
            <person name="Fartmann B."/>
            <person name="Valle G."/>
            <person name="Bloecker H."/>
            <person name="Perez-Alonso M."/>
            <person name="Obermaier B."/>
            <person name="Delseny M."/>
            <person name="Boutry M."/>
            <person name="Grivell L.A."/>
            <person name="Mache R."/>
            <person name="Puigdomenech P."/>
            <person name="De Simone V."/>
            <person name="Choisne N."/>
            <person name="Artiguenave F."/>
            <person name="Robert C."/>
            <person name="Brottier P."/>
            <person name="Wincker P."/>
            <person name="Cattolico L."/>
            <person name="Weissenbach J."/>
            <person name="Saurin W."/>
            <person name="Quetier F."/>
            <person name="Schaefer M."/>
            <person name="Mueller-Auer S."/>
            <person name="Gabel C."/>
            <person name="Fuchs M."/>
            <person name="Benes V."/>
            <person name="Wurmbach E."/>
            <person name="Drzonek H."/>
            <person name="Erfle H."/>
            <person name="Jordan N."/>
            <person name="Bangert S."/>
            <person name="Wiedelmann R."/>
            <person name="Kranz H."/>
            <person name="Voss H."/>
            <person name="Holland R."/>
            <person name="Brandt P."/>
            <person name="Nyakatura G."/>
            <person name="Vezzi A."/>
            <person name="D'Angelo M."/>
            <person name="Pallavicini A."/>
            <person name="Toppo S."/>
            <person name="Simionati B."/>
            <person name="Conrad A."/>
            <person name="Hornischer K."/>
            <person name="Kauer G."/>
            <person name="Loehnert T.-H."/>
            <person name="Nordsiek G."/>
            <person name="Reichelt J."/>
            <person name="Scharfe M."/>
            <person name="Schoen O."/>
            <person name="Bargues M."/>
            <person name="Terol J."/>
            <person name="Climent J."/>
            <person name="Navarro P."/>
            <person name="Collado C."/>
            <person name="Perez-Perez A."/>
            <person name="Ottenwaelder B."/>
            <person name="Duchemin D."/>
            <person name="Cooke R."/>
            <person name="Laudie M."/>
            <person name="Berger-Llauro C."/>
            <person name="Purnelle B."/>
            <person name="Masuy D."/>
            <person name="de Haan M."/>
            <person name="Maarse A.C."/>
            <person name="Alcaraz J.-P."/>
            <person name="Cottet A."/>
            <person name="Casacuberta E."/>
            <person name="Monfort A."/>
            <person name="Argiriou A."/>
            <person name="Flores M."/>
            <person name="Liguori R."/>
            <person name="Vitale D."/>
            <person name="Mannhaupt G."/>
            <person name="Haase D."/>
            <person name="Schoof H."/>
            <person name="Rudd S."/>
            <person name="Zaccaria P."/>
            <person name="Mewes H.-W."/>
            <person name="Mayer K.F.X."/>
            <person name="Kaul S."/>
            <person name="Town C.D."/>
            <person name="Koo H.L."/>
            <person name="Tallon L.J."/>
            <person name="Jenkins J."/>
            <person name="Rooney T."/>
            <person name="Rizzo M."/>
            <person name="Walts A."/>
            <person name="Utterback T."/>
            <person name="Fujii C.Y."/>
            <person name="Shea T.P."/>
            <person name="Creasy T.H."/>
            <person name="Haas B."/>
            <person name="Maiti R."/>
            <person name="Wu D."/>
            <person name="Peterson J."/>
            <person name="Van Aken S."/>
            <person name="Pai G."/>
            <person name="Militscher J."/>
            <person name="Sellers P."/>
            <person name="Gill J.E."/>
            <person name="Feldblyum T.V."/>
            <person name="Preuss D."/>
            <person name="Lin X."/>
            <person name="Nierman W.C."/>
            <person name="Salzberg S.L."/>
            <person name="White O."/>
            <person name="Venter J.C."/>
            <person name="Fraser C.M."/>
            <person name="Kaneko T."/>
            <person name="Nakamura Y."/>
            <person name="Sato S."/>
            <person name="Kato T."/>
            <person name="Asamizu E."/>
            <person name="Sasamoto S."/>
            <person name="Kimura T."/>
            <person name="Idesawa K."/>
            <person name="Kawashima K."/>
            <person name="Kishida Y."/>
            <person name="Kiyokawa C."/>
            <person name="Kohara M."/>
            <person name="Matsumoto M."/>
            <person name="Matsuno A."/>
            <person name="Muraki A."/>
            <person name="Nakayama S."/>
            <person name="Nakazaki N."/>
            <person name="Shinpo S."/>
            <person name="Takeuchi C."/>
            <person name="Wada T."/>
            <person name="Watanabe A."/>
            <person name="Yamada M."/>
            <person name="Yasuda M."/>
            <person name="Tabata S."/>
        </authorList>
    </citation>
    <scope>NUCLEOTIDE SEQUENCE [LARGE SCALE GENOMIC DNA]</scope>
    <source>
        <strain>cv. Columbia</strain>
    </source>
</reference>
<reference key="2">
    <citation type="journal article" date="2017" name="Plant J.">
        <title>Araport11: a complete reannotation of the Arabidopsis thaliana reference genome.</title>
        <authorList>
            <person name="Cheng C.Y."/>
            <person name="Krishnakumar V."/>
            <person name="Chan A.P."/>
            <person name="Thibaud-Nissen F."/>
            <person name="Schobel S."/>
            <person name="Town C.D."/>
        </authorList>
    </citation>
    <scope>GENOME REANNOTATION</scope>
    <source>
        <strain>cv. Columbia</strain>
    </source>
</reference>
<reference key="3">
    <citation type="journal article" date="2003" name="Science">
        <title>Empirical analysis of transcriptional activity in the Arabidopsis genome.</title>
        <authorList>
            <person name="Yamada K."/>
            <person name="Lim J."/>
            <person name="Dale J.M."/>
            <person name="Chen H."/>
            <person name="Shinn P."/>
            <person name="Palm C.J."/>
            <person name="Southwick A.M."/>
            <person name="Wu H.C."/>
            <person name="Kim C.J."/>
            <person name="Nguyen M."/>
            <person name="Pham P.K."/>
            <person name="Cheuk R.F."/>
            <person name="Karlin-Newmann G."/>
            <person name="Liu S.X."/>
            <person name="Lam B."/>
            <person name="Sakano H."/>
            <person name="Wu T."/>
            <person name="Yu G."/>
            <person name="Miranda M."/>
            <person name="Quach H.L."/>
            <person name="Tripp M."/>
            <person name="Chang C.H."/>
            <person name="Lee J.M."/>
            <person name="Toriumi M.J."/>
            <person name="Chan M.M."/>
            <person name="Tang C.C."/>
            <person name="Onodera C.S."/>
            <person name="Deng J.M."/>
            <person name="Akiyama K."/>
            <person name="Ansari Y."/>
            <person name="Arakawa T."/>
            <person name="Banh J."/>
            <person name="Banno F."/>
            <person name="Bowser L."/>
            <person name="Brooks S.Y."/>
            <person name="Carninci P."/>
            <person name="Chao Q."/>
            <person name="Choy N."/>
            <person name="Enju A."/>
            <person name="Goldsmith A.D."/>
            <person name="Gurjal M."/>
            <person name="Hansen N.F."/>
            <person name="Hayashizaki Y."/>
            <person name="Johnson-Hopson C."/>
            <person name="Hsuan V.W."/>
            <person name="Iida K."/>
            <person name="Karnes M."/>
            <person name="Khan S."/>
            <person name="Koesema E."/>
            <person name="Ishida J."/>
            <person name="Jiang P.X."/>
            <person name="Jones T."/>
            <person name="Kawai J."/>
            <person name="Kamiya A."/>
            <person name="Meyers C."/>
            <person name="Nakajima M."/>
            <person name="Narusaka M."/>
            <person name="Seki M."/>
            <person name="Sakurai T."/>
            <person name="Satou M."/>
            <person name="Tamse R."/>
            <person name="Vaysberg M."/>
            <person name="Wallender E.K."/>
            <person name="Wong C."/>
            <person name="Yamamura Y."/>
            <person name="Yuan S."/>
            <person name="Shinozaki K."/>
            <person name="Davis R.W."/>
            <person name="Theologis A."/>
            <person name="Ecker J.R."/>
        </authorList>
    </citation>
    <scope>NUCLEOTIDE SEQUENCE [LARGE SCALE MRNA]</scope>
    <source>
        <strain>cv. Columbia</strain>
    </source>
</reference>
<reference key="4">
    <citation type="journal article" date="2005" name="Plant Cell">
        <title>Arabidopsis peroxisomal citrate synthase is required for fatty acid respiration and seed germination.</title>
        <authorList>
            <person name="Pracharoenwattana I."/>
            <person name="Cornah J.E."/>
            <person name="Smith S.M."/>
        </authorList>
    </citation>
    <scope>TISSUE SPECIFICITY</scope>
    <scope>DEVELOPMENTAL STAGE</scope>
</reference>
<gene>
    <name type="primary">CSY1</name>
    <name type="ordered locus">At3g58740</name>
    <name type="ORF">T20N10.90</name>
</gene>
<evidence type="ECO:0000255" key="1"/>
<evidence type="ECO:0000255" key="2">
    <source>
        <dbReference type="PROSITE-ProRule" id="PRU10117"/>
    </source>
</evidence>
<evidence type="ECO:0000269" key="3">
    <source>
    </source>
</evidence>
<evidence type="ECO:0000305" key="4"/>
<feature type="transit peptide" description="Peroxisome" evidence="1">
    <location>
        <begin position="1"/>
        <end status="unknown"/>
    </location>
</feature>
<feature type="chain" id="PRO_0000005481" description="Citrate synthase 1, peroxisomal">
    <location>
        <begin status="unknown"/>
        <end position="480"/>
    </location>
</feature>
<feature type="active site" evidence="2">
    <location>
        <position position="321"/>
    </location>
</feature>
<feature type="active site" evidence="2">
    <location>
        <position position="360"/>
    </location>
</feature>
<feature type="active site" evidence="2">
    <location>
        <position position="416"/>
    </location>
</feature>
<keyword id="KW-0576">Peroxisome</keyword>
<keyword id="KW-1185">Reference proteome</keyword>
<keyword id="KW-0808">Transferase</keyword>
<keyword id="KW-0809">Transit peptide</keyword>
<keyword id="KW-0816">Tricarboxylic acid cycle</keyword>
<dbReference type="EC" id="2.3.3.16"/>
<dbReference type="EMBL" id="AL353032">
    <property type="protein sequence ID" value="CAB88291.1"/>
    <property type="molecule type" value="Genomic_DNA"/>
</dbReference>
<dbReference type="EMBL" id="CP002686">
    <property type="protein sequence ID" value="AEE79825.1"/>
    <property type="molecule type" value="Genomic_DNA"/>
</dbReference>
<dbReference type="EMBL" id="AY099611">
    <property type="protein sequence ID" value="AAM20462.1"/>
    <property type="molecule type" value="mRNA"/>
</dbReference>
<dbReference type="EMBL" id="BT002169">
    <property type="protein sequence ID" value="AAN72180.1"/>
    <property type="molecule type" value="mRNA"/>
</dbReference>
<dbReference type="PIR" id="T49157">
    <property type="entry name" value="T49157"/>
</dbReference>
<dbReference type="RefSeq" id="NP_191433.1">
    <property type="nucleotide sequence ID" value="NM_115736.2"/>
</dbReference>
<dbReference type="SMR" id="Q9LXS7"/>
<dbReference type="BioGRID" id="10358">
    <property type="interactions" value="21"/>
</dbReference>
<dbReference type="FunCoup" id="Q9LXS7">
    <property type="interactions" value="464"/>
</dbReference>
<dbReference type="IntAct" id="Q9LXS7">
    <property type="interactions" value="1"/>
</dbReference>
<dbReference type="STRING" id="3702.Q9LXS7"/>
<dbReference type="iPTMnet" id="Q9LXS7"/>
<dbReference type="PaxDb" id="3702-AT3G58740.1"/>
<dbReference type="ProteomicsDB" id="246801"/>
<dbReference type="EnsemblPlants" id="AT3G58740.1">
    <property type="protein sequence ID" value="AT3G58740.1"/>
    <property type="gene ID" value="AT3G58740"/>
</dbReference>
<dbReference type="GeneID" id="825043"/>
<dbReference type="Gramene" id="AT3G58740.1">
    <property type="protein sequence ID" value="AT3G58740.1"/>
    <property type="gene ID" value="AT3G58740"/>
</dbReference>
<dbReference type="KEGG" id="ath:AT3G58740"/>
<dbReference type="Araport" id="AT3G58740"/>
<dbReference type="TAIR" id="AT3G58740">
    <property type="gene designation" value="CSY1"/>
</dbReference>
<dbReference type="eggNOG" id="KOG2617">
    <property type="taxonomic scope" value="Eukaryota"/>
</dbReference>
<dbReference type="HOGENOM" id="CLU_025068_0_1_1"/>
<dbReference type="InParanoid" id="Q9LXS7"/>
<dbReference type="PhylomeDB" id="Q9LXS7"/>
<dbReference type="BioCyc" id="ARA:AT3G58740-MONOMER"/>
<dbReference type="UniPathway" id="UPA00223">
    <property type="reaction ID" value="UER00717"/>
</dbReference>
<dbReference type="PRO" id="PR:Q9LXS7"/>
<dbReference type="Proteomes" id="UP000006548">
    <property type="component" value="Chromosome 3"/>
</dbReference>
<dbReference type="ExpressionAtlas" id="Q9LXS7">
    <property type="expression patterns" value="baseline and differential"/>
</dbReference>
<dbReference type="GO" id="GO:0005777">
    <property type="term" value="C:peroxisome"/>
    <property type="evidence" value="ECO:0000250"/>
    <property type="project" value="TAIR"/>
</dbReference>
<dbReference type="GO" id="GO:0036440">
    <property type="term" value="F:citrate synthase activity"/>
    <property type="evidence" value="ECO:0007669"/>
    <property type="project" value="UniProtKB-EC"/>
</dbReference>
<dbReference type="GO" id="GO:0006099">
    <property type="term" value="P:tricarboxylic acid cycle"/>
    <property type="evidence" value="ECO:0007669"/>
    <property type="project" value="UniProtKB-UniPathway"/>
</dbReference>
<dbReference type="FunFam" id="1.10.230.10:FF:000002">
    <property type="entry name" value="Citrate synthase"/>
    <property type="match status" value="1"/>
</dbReference>
<dbReference type="FunFam" id="1.10.580.10:FF:000005">
    <property type="entry name" value="Citrate synthase"/>
    <property type="match status" value="1"/>
</dbReference>
<dbReference type="Gene3D" id="1.10.580.10">
    <property type="entry name" value="Citrate Synthase, domain 1"/>
    <property type="match status" value="1"/>
</dbReference>
<dbReference type="Gene3D" id="1.10.230.10">
    <property type="entry name" value="Cytochrome P450-Terp, domain 2"/>
    <property type="match status" value="1"/>
</dbReference>
<dbReference type="InterPro" id="IPR016142">
    <property type="entry name" value="Citrate_synth-like_lrg_a-sub"/>
</dbReference>
<dbReference type="InterPro" id="IPR016143">
    <property type="entry name" value="Citrate_synth-like_sm_a-sub"/>
</dbReference>
<dbReference type="InterPro" id="IPR002020">
    <property type="entry name" value="Citrate_synthase"/>
</dbReference>
<dbReference type="InterPro" id="IPR019810">
    <property type="entry name" value="Citrate_synthase_AS"/>
</dbReference>
<dbReference type="InterPro" id="IPR024176">
    <property type="entry name" value="Citrate_synthase_bac-typ"/>
</dbReference>
<dbReference type="InterPro" id="IPR036969">
    <property type="entry name" value="Citrate_synthase_sf"/>
</dbReference>
<dbReference type="PANTHER" id="PTHR11739">
    <property type="entry name" value="CITRATE SYNTHASE"/>
    <property type="match status" value="1"/>
</dbReference>
<dbReference type="PANTHER" id="PTHR11739:SF27">
    <property type="entry name" value="CITRATE SYNTHASE 1, PEROXISOMAL-RELATED"/>
    <property type="match status" value="1"/>
</dbReference>
<dbReference type="Pfam" id="PF00285">
    <property type="entry name" value="Citrate_synt"/>
    <property type="match status" value="1"/>
</dbReference>
<dbReference type="PIRSF" id="PIRSF001369">
    <property type="entry name" value="Citrate_synth"/>
    <property type="match status" value="1"/>
</dbReference>
<dbReference type="PRINTS" id="PR00143">
    <property type="entry name" value="CITRTSNTHASE"/>
</dbReference>
<dbReference type="SUPFAM" id="SSF48256">
    <property type="entry name" value="Citrate synthase"/>
    <property type="match status" value="1"/>
</dbReference>
<dbReference type="PROSITE" id="PS00480">
    <property type="entry name" value="CITRATE_SYNTHASE"/>
    <property type="match status" value="1"/>
</dbReference>
<comment type="catalytic activity">
    <reaction evidence="2">
        <text>oxaloacetate + acetyl-CoA + H2O = citrate + CoA + H(+)</text>
        <dbReference type="Rhea" id="RHEA:16845"/>
        <dbReference type="ChEBI" id="CHEBI:15377"/>
        <dbReference type="ChEBI" id="CHEBI:15378"/>
        <dbReference type="ChEBI" id="CHEBI:16452"/>
        <dbReference type="ChEBI" id="CHEBI:16947"/>
        <dbReference type="ChEBI" id="CHEBI:57287"/>
        <dbReference type="ChEBI" id="CHEBI:57288"/>
        <dbReference type="EC" id="2.3.3.16"/>
    </reaction>
</comment>
<comment type="pathway">
    <text>Carbohydrate metabolism; tricarboxylic acid cycle; isocitrate from oxaloacetate: step 1/2.</text>
</comment>
<comment type="subcellular location">
    <subcellularLocation>
        <location evidence="4">Peroxisome</location>
    </subcellularLocation>
</comment>
<comment type="tissue specificity">
    <text evidence="3">Expressed only in siliques. Not expressed in flower, stem, cauline leaf, young leaf, mature leaf and senescent leaf.</text>
</comment>
<comment type="developmental stage">
    <text evidence="3">Weakly or not expressed during seedling growth.</text>
</comment>
<comment type="miscellaneous">
    <text>Citrate synthase is found in nearly all cells capable of oxidative metabolism.</text>
</comment>
<comment type="similarity">
    <text evidence="4">Belongs to the citrate synthase family.</text>
</comment>
<proteinExistence type="evidence at transcript level"/>
<sequence length="480" mass="52895">MEISERARARLAVLNAHLTVSEPNQVLPAIEPWCTSAHITAAPHGSLKGNLKIVDERTGNEYQVPVSEHGTVKTVDLKKITTGKDDKGLNLYDPGYLNTAPVRSSISYIDGDEGILRYRGYPVEELAEKSTYTEVTYLLIYGNLPSQRQLADWEFAISQNSAVPQGVLDMIQSMPNDVHPVGALVTAMSALSIFYPDANPSLMGLGVYKSKQVRDKQIVRVLGQAPTIAAAAYLRKAGKPPVQPLSNLSYSENFLYMVESMGDRSYKPNPRLARVLDILFILQAEHEMNCSTAAARHLSSSGGDVYTAVSGGVGAIYGPLHGGAVEATINMLSEIGTVENIPEFIESVKNKKRRLSGFGHRIYKNYDPRGKVVKKLADEVFSILGRDPLVEVGDALEKAALSDEYFVKRKLYPNVDFYSGLINRAMGIPSSFTAVSRIAGYLSHWRESLDDPDTKIMRPQQVYTGAGIRHYETVRERTKL</sequence>
<organism>
    <name type="scientific">Arabidopsis thaliana</name>
    <name type="common">Mouse-ear cress</name>
    <dbReference type="NCBI Taxonomy" id="3702"/>
    <lineage>
        <taxon>Eukaryota</taxon>
        <taxon>Viridiplantae</taxon>
        <taxon>Streptophyta</taxon>
        <taxon>Embryophyta</taxon>
        <taxon>Tracheophyta</taxon>
        <taxon>Spermatophyta</taxon>
        <taxon>Magnoliopsida</taxon>
        <taxon>eudicotyledons</taxon>
        <taxon>Gunneridae</taxon>
        <taxon>Pentapetalae</taxon>
        <taxon>rosids</taxon>
        <taxon>malvids</taxon>
        <taxon>Brassicales</taxon>
        <taxon>Brassicaceae</taxon>
        <taxon>Camelineae</taxon>
        <taxon>Arabidopsis</taxon>
    </lineage>
</organism>
<name>CISY1_ARATH</name>
<protein>
    <recommendedName>
        <fullName>Citrate synthase 1, peroxisomal</fullName>
        <ecNumber>2.3.3.16</ecNumber>
    </recommendedName>
</protein>